<proteinExistence type="inferred from homology"/>
<keyword id="KW-1185">Reference proteome</keyword>
<keyword id="KW-0687">Ribonucleoprotein</keyword>
<keyword id="KW-0689">Ribosomal protein</keyword>
<keyword id="KW-0694">RNA-binding</keyword>
<keyword id="KW-0699">rRNA-binding</keyword>
<reference key="1">
    <citation type="journal article" date="2016" name="Stand. Genomic Sci.">
        <title>Complete genome sequence of the Antarctic Halorubrum lacusprofundi type strain ACAM 34.</title>
        <authorList>
            <person name="Anderson I.J."/>
            <person name="DasSarma P."/>
            <person name="Lucas S."/>
            <person name="Copeland A."/>
            <person name="Lapidus A."/>
            <person name="Del Rio T.G."/>
            <person name="Tice H."/>
            <person name="Dalin E."/>
            <person name="Bruce D.C."/>
            <person name="Goodwin L."/>
            <person name="Pitluck S."/>
            <person name="Sims D."/>
            <person name="Brettin T.S."/>
            <person name="Detter J.C."/>
            <person name="Han C.S."/>
            <person name="Larimer F."/>
            <person name="Hauser L."/>
            <person name="Land M."/>
            <person name="Ivanova N."/>
            <person name="Richardson P."/>
            <person name="Cavicchioli R."/>
            <person name="DasSarma S."/>
            <person name="Woese C.R."/>
            <person name="Kyrpides N.C."/>
        </authorList>
    </citation>
    <scope>NUCLEOTIDE SEQUENCE [LARGE SCALE GENOMIC DNA]</scope>
    <source>
        <strain>ATCC 49239 / DSM 5036 / JCM 8891 / ACAM 34</strain>
    </source>
</reference>
<evidence type="ECO:0000255" key="1">
    <source>
        <dbReference type="HAMAP-Rule" id="MF_01320"/>
    </source>
</evidence>
<evidence type="ECO:0000256" key="2">
    <source>
        <dbReference type="SAM" id="MobiDB-lite"/>
    </source>
</evidence>
<evidence type="ECO:0000305" key="3"/>
<protein>
    <recommendedName>
        <fullName evidence="1">Large ribosomal subunit protein uL2</fullName>
    </recommendedName>
    <alternativeName>
        <fullName evidence="3">50S ribosomal protein L2</fullName>
    </alternativeName>
</protein>
<sequence>MGRRIQGQRRGRGGPTFRAPSHRYKAELSHKKLEDVDTITGEIVGIEHDPARSAPLAEIEFEDDDRRLVLAPEGVRVGDTIQVGVSAEIKPGNTLPLAEIPEGVPVCNVESNRGDGGKFARASGVSATLLTHDRDVAVVQLPSGEVKRLDPQCRATIGVVAGGGRTEKPFVKAGNKYHKMKARGTKYPRVRGVAMNAVDHPFGGGGRQHPGQPKSVSRDAPPGRKVGDIASKRTGRGSNK</sequence>
<comment type="function">
    <text evidence="1">One of the primary rRNA binding proteins. Required for association of the 30S and 50S subunits to form the 70S ribosome, for tRNA binding and peptide bond formation. It has been suggested to have peptidyltransferase activity; this is somewhat controversial. Makes several contacts with the 16S rRNA in the 70S ribosome.</text>
</comment>
<comment type="subunit">
    <text evidence="1">Part of the 50S ribosomal subunit. Forms a bridge to the 30S subunit in the 70S ribosome.</text>
</comment>
<comment type="similarity">
    <text evidence="1">Belongs to the universal ribosomal protein uL2 family.</text>
</comment>
<accession>B9LSS4</accession>
<feature type="chain" id="PRO_1000165752" description="Large ribosomal subunit protein uL2">
    <location>
        <begin position="1"/>
        <end position="240"/>
    </location>
</feature>
<feature type="region of interest" description="Disordered" evidence="2">
    <location>
        <begin position="1"/>
        <end position="21"/>
    </location>
</feature>
<feature type="region of interest" description="Disordered" evidence="2">
    <location>
        <begin position="198"/>
        <end position="240"/>
    </location>
</feature>
<feature type="compositionally biased region" description="Basic residues" evidence="2">
    <location>
        <begin position="1"/>
        <end position="12"/>
    </location>
</feature>
<feature type="compositionally biased region" description="Basic and acidic residues" evidence="2">
    <location>
        <begin position="221"/>
        <end position="231"/>
    </location>
</feature>
<organism>
    <name type="scientific">Halorubrum lacusprofundi (strain ATCC 49239 / DSM 5036 / JCM 8891 / ACAM 34)</name>
    <dbReference type="NCBI Taxonomy" id="416348"/>
    <lineage>
        <taxon>Archaea</taxon>
        <taxon>Methanobacteriati</taxon>
        <taxon>Methanobacteriota</taxon>
        <taxon>Stenosarchaea group</taxon>
        <taxon>Halobacteria</taxon>
        <taxon>Halobacteriales</taxon>
        <taxon>Haloferacaceae</taxon>
        <taxon>Halorubrum</taxon>
    </lineage>
</organism>
<gene>
    <name evidence="1" type="primary">rpl2</name>
    <name type="ordered locus">Hlac_2446</name>
</gene>
<name>RL2_HALLT</name>
<dbReference type="EMBL" id="CP001365">
    <property type="protein sequence ID" value="ACM58021.1"/>
    <property type="molecule type" value="Genomic_DNA"/>
</dbReference>
<dbReference type="RefSeq" id="WP_015911133.1">
    <property type="nucleotide sequence ID" value="NC_012029.1"/>
</dbReference>
<dbReference type="SMR" id="B9LSS4"/>
<dbReference type="GeneID" id="7400564"/>
<dbReference type="KEGG" id="hla:Hlac_2446"/>
<dbReference type="eggNOG" id="arCOG04067">
    <property type="taxonomic scope" value="Archaea"/>
</dbReference>
<dbReference type="HOGENOM" id="CLU_036235_0_3_2"/>
<dbReference type="Proteomes" id="UP000000740">
    <property type="component" value="Chromosome 1"/>
</dbReference>
<dbReference type="GO" id="GO:0022625">
    <property type="term" value="C:cytosolic large ribosomal subunit"/>
    <property type="evidence" value="ECO:0007669"/>
    <property type="project" value="TreeGrafter"/>
</dbReference>
<dbReference type="GO" id="GO:0019843">
    <property type="term" value="F:rRNA binding"/>
    <property type="evidence" value="ECO:0007669"/>
    <property type="project" value="UniProtKB-UniRule"/>
</dbReference>
<dbReference type="GO" id="GO:0003735">
    <property type="term" value="F:structural constituent of ribosome"/>
    <property type="evidence" value="ECO:0007669"/>
    <property type="project" value="InterPro"/>
</dbReference>
<dbReference type="GO" id="GO:0002181">
    <property type="term" value="P:cytoplasmic translation"/>
    <property type="evidence" value="ECO:0007669"/>
    <property type="project" value="TreeGrafter"/>
</dbReference>
<dbReference type="FunFam" id="2.30.30.30:FF:000001">
    <property type="entry name" value="50S ribosomal protein L2"/>
    <property type="match status" value="1"/>
</dbReference>
<dbReference type="FunFam" id="2.40.50.140:FF:000020">
    <property type="entry name" value="60S ribosomal protein L2"/>
    <property type="match status" value="1"/>
</dbReference>
<dbReference type="FunFam" id="4.10.950.10:FF:000002">
    <property type="entry name" value="60S ribosomal protein L2"/>
    <property type="match status" value="1"/>
</dbReference>
<dbReference type="Gene3D" id="2.30.30.30">
    <property type="match status" value="1"/>
</dbReference>
<dbReference type="Gene3D" id="2.40.50.140">
    <property type="entry name" value="Nucleic acid-binding proteins"/>
    <property type="match status" value="1"/>
</dbReference>
<dbReference type="Gene3D" id="4.10.950.10">
    <property type="entry name" value="Ribosomal protein L2, domain 3"/>
    <property type="match status" value="1"/>
</dbReference>
<dbReference type="HAMAP" id="MF_01320_A">
    <property type="entry name" value="Ribosomal_uL2_A"/>
    <property type="match status" value="1"/>
</dbReference>
<dbReference type="InterPro" id="IPR012340">
    <property type="entry name" value="NA-bd_OB-fold"/>
</dbReference>
<dbReference type="InterPro" id="IPR014722">
    <property type="entry name" value="Rib_uL2_dom2"/>
</dbReference>
<dbReference type="InterPro" id="IPR002171">
    <property type="entry name" value="Ribosomal_uL2"/>
</dbReference>
<dbReference type="InterPro" id="IPR023672">
    <property type="entry name" value="Ribosomal_uL2_arc_euk"/>
</dbReference>
<dbReference type="InterPro" id="IPR022669">
    <property type="entry name" value="Ribosomal_uL2_C"/>
</dbReference>
<dbReference type="InterPro" id="IPR022671">
    <property type="entry name" value="Ribosomal_uL2_CS"/>
</dbReference>
<dbReference type="InterPro" id="IPR014726">
    <property type="entry name" value="Ribosomal_uL2_dom3"/>
</dbReference>
<dbReference type="InterPro" id="IPR022666">
    <property type="entry name" value="Ribosomal_uL2_RNA-bd_dom"/>
</dbReference>
<dbReference type="InterPro" id="IPR008991">
    <property type="entry name" value="Translation_prot_SH3-like_sf"/>
</dbReference>
<dbReference type="NCBIfam" id="NF007180">
    <property type="entry name" value="PRK09612.1"/>
    <property type="match status" value="1"/>
</dbReference>
<dbReference type="PANTHER" id="PTHR13691:SF16">
    <property type="entry name" value="LARGE RIBOSOMAL SUBUNIT PROTEIN UL2"/>
    <property type="match status" value="1"/>
</dbReference>
<dbReference type="PANTHER" id="PTHR13691">
    <property type="entry name" value="RIBOSOMAL PROTEIN L2"/>
    <property type="match status" value="1"/>
</dbReference>
<dbReference type="Pfam" id="PF00181">
    <property type="entry name" value="Ribosomal_L2"/>
    <property type="match status" value="1"/>
</dbReference>
<dbReference type="Pfam" id="PF03947">
    <property type="entry name" value="Ribosomal_L2_C"/>
    <property type="match status" value="1"/>
</dbReference>
<dbReference type="PIRSF" id="PIRSF002158">
    <property type="entry name" value="Ribosomal_L2"/>
    <property type="match status" value="1"/>
</dbReference>
<dbReference type="SMART" id="SM01383">
    <property type="entry name" value="Ribosomal_L2"/>
    <property type="match status" value="1"/>
</dbReference>
<dbReference type="SMART" id="SM01382">
    <property type="entry name" value="Ribosomal_L2_C"/>
    <property type="match status" value="1"/>
</dbReference>
<dbReference type="SUPFAM" id="SSF50249">
    <property type="entry name" value="Nucleic acid-binding proteins"/>
    <property type="match status" value="1"/>
</dbReference>
<dbReference type="SUPFAM" id="SSF50104">
    <property type="entry name" value="Translation proteins SH3-like domain"/>
    <property type="match status" value="1"/>
</dbReference>
<dbReference type="PROSITE" id="PS00467">
    <property type="entry name" value="RIBOSOMAL_L2"/>
    <property type="match status" value="1"/>
</dbReference>